<keyword id="KW-0539">Nucleus</keyword>
<keyword id="KW-0677">Repeat</keyword>
<keyword id="KW-0819">tRNA processing</keyword>
<keyword id="KW-0853">WD repeat</keyword>
<sequence length="502" mass="54914">MVVNYQHPIQCIRYVEKQTAGFRNLFLASAGSKIYTYAAETGRKLAIWPEAPNASHSTVVSVAPSSEGDEPSAKKRKVSPVPEQTAKGGQPEASTAWSTIPILTVSSDGNFLVAVTGEDKCLRVFEIEESGHLKQLSERHMPKRPSAITLVDDDKTILCGDKFGDVYSLPLIDTGKSSIAPKIHAKMKPNQPAATTLTVHSKRNLASLEQQLRHYSQNEKTAEEKPTSAFELHLILGHVSMLTDLVYVSVPVDATSGRQRPYIFTADRDEHIRVSRGPPQAHIIENYCLGHTSFVSSLCVPQWAPEYLVSGGGDNHLIVWRWNESRLVQKVPLLEEGTDSEVVVRRIWALSLTKAANSQENANVILVALDGSSKLLCFTLESDGSLKAQNSIQASGNVLDLTVPSENSSIVVSVDAVREAGSTQEWRTSPSSPSTLVEAFRLKPASEGPLDWERTSEAITAQINSEGTSDISADLDEKQKKELNDSLYSLGNLRKKNMGEDD</sequence>
<feature type="chain" id="PRO_0000370513" description="tRNA (guanine-N(7)-)-methyltransferase non-catalytic subunit trm82">
    <location>
        <begin position="1"/>
        <end position="502"/>
    </location>
</feature>
<feature type="repeat" description="WD 1">
    <location>
        <begin position="4"/>
        <end position="58"/>
    </location>
</feature>
<feature type="repeat" description="WD 2">
    <location>
        <begin position="95"/>
        <end position="135"/>
    </location>
</feature>
<feature type="repeat" description="WD 3">
    <location>
        <begin position="290"/>
        <end position="330"/>
    </location>
</feature>
<feature type="region of interest" description="Disordered" evidence="2">
    <location>
        <begin position="58"/>
        <end position="93"/>
    </location>
</feature>
<gene>
    <name type="primary">trm82</name>
    <name type="ORF">AFUB_005430</name>
</gene>
<organism>
    <name type="scientific">Aspergillus fumigatus (strain CBS 144.89 / FGSC A1163 / CEA10)</name>
    <name type="common">Neosartorya fumigata</name>
    <dbReference type="NCBI Taxonomy" id="451804"/>
    <lineage>
        <taxon>Eukaryota</taxon>
        <taxon>Fungi</taxon>
        <taxon>Dikarya</taxon>
        <taxon>Ascomycota</taxon>
        <taxon>Pezizomycotina</taxon>
        <taxon>Eurotiomycetes</taxon>
        <taxon>Eurotiomycetidae</taxon>
        <taxon>Eurotiales</taxon>
        <taxon>Aspergillaceae</taxon>
        <taxon>Aspergillus</taxon>
        <taxon>Aspergillus subgen. Fumigati</taxon>
    </lineage>
</organism>
<proteinExistence type="inferred from homology"/>
<name>TRM82_ASPFC</name>
<dbReference type="EMBL" id="DS499594">
    <property type="protein sequence ID" value="EDP55844.1"/>
    <property type="molecule type" value="Genomic_DNA"/>
</dbReference>
<dbReference type="SMR" id="B0XNT4"/>
<dbReference type="EnsemblFungi" id="EDP55844">
    <property type="protein sequence ID" value="EDP55844"/>
    <property type="gene ID" value="AFUB_005430"/>
</dbReference>
<dbReference type="VEuPathDB" id="FungiDB:AFUB_005430"/>
<dbReference type="HOGENOM" id="CLU_022082_0_0_1"/>
<dbReference type="OrthoDB" id="65738at5052"/>
<dbReference type="PhylomeDB" id="B0XNT4"/>
<dbReference type="UniPathway" id="UPA00989"/>
<dbReference type="Proteomes" id="UP000001699">
    <property type="component" value="Unassembled WGS sequence"/>
</dbReference>
<dbReference type="GO" id="GO:0005829">
    <property type="term" value="C:cytosol"/>
    <property type="evidence" value="ECO:0007669"/>
    <property type="project" value="TreeGrafter"/>
</dbReference>
<dbReference type="GO" id="GO:0005634">
    <property type="term" value="C:nucleus"/>
    <property type="evidence" value="ECO:0007669"/>
    <property type="project" value="UniProtKB-SubCell"/>
</dbReference>
<dbReference type="GO" id="GO:0043527">
    <property type="term" value="C:tRNA methyltransferase complex"/>
    <property type="evidence" value="ECO:0007669"/>
    <property type="project" value="TreeGrafter"/>
</dbReference>
<dbReference type="GO" id="GO:0106004">
    <property type="term" value="P:tRNA (guanine-N7)-methylation"/>
    <property type="evidence" value="ECO:0007669"/>
    <property type="project" value="UniProtKB-UniRule"/>
</dbReference>
<dbReference type="Gene3D" id="2.130.10.10">
    <property type="entry name" value="YVTN repeat-like/Quinoprotein amine dehydrogenase"/>
    <property type="match status" value="1"/>
</dbReference>
<dbReference type="HAMAP" id="MF_03056">
    <property type="entry name" value="TRM82"/>
    <property type="match status" value="1"/>
</dbReference>
<dbReference type="InterPro" id="IPR028884">
    <property type="entry name" value="Trm82"/>
</dbReference>
<dbReference type="InterPro" id="IPR015943">
    <property type="entry name" value="WD40/YVTN_repeat-like_dom_sf"/>
</dbReference>
<dbReference type="InterPro" id="IPR036322">
    <property type="entry name" value="WD40_repeat_dom_sf"/>
</dbReference>
<dbReference type="InterPro" id="IPR001680">
    <property type="entry name" value="WD40_rpt"/>
</dbReference>
<dbReference type="PANTHER" id="PTHR16288:SF0">
    <property type="entry name" value="TRNA (GUANINE-N(7)-)-METHYLTRANSFERASE NON-CATALYTIC SUBUNIT WDR4"/>
    <property type="match status" value="1"/>
</dbReference>
<dbReference type="PANTHER" id="PTHR16288">
    <property type="entry name" value="WD40 REPEAT PROTEIN 4"/>
    <property type="match status" value="1"/>
</dbReference>
<dbReference type="SMART" id="SM00320">
    <property type="entry name" value="WD40"/>
    <property type="match status" value="2"/>
</dbReference>
<dbReference type="SUPFAM" id="SSF50978">
    <property type="entry name" value="WD40 repeat-like"/>
    <property type="match status" value="1"/>
</dbReference>
<reference key="1">
    <citation type="journal article" date="2008" name="PLoS Genet.">
        <title>Genomic islands in the pathogenic filamentous fungus Aspergillus fumigatus.</title>
        <authorList>
            <person name="Fedorova N.D."/>
            <person name="Khaldi N."/>
            <person name="Joardar V.S."/>
            <person name="Maiti R."/>
            <person name="Amedeo P."/>
            <person name="Anderson M.J."/>
            <person name="Crabtree J."/>
            <person name="Silva J.C."/>
            <person name="Badger J.H."/>
            <person name="Albarraq A."/>
            <person name="Angiuoli S."/>
            <person name="Bussey H."/>
            <person name="Bowyer P."/>
            <person name="Cotty P.J."/>
            <person name="Dyer P.S."/>
            <person name="Egan A."/>
            <person name="Galens K."/>
            <person name="Fraser-Liggett C.M."/>
            <person name="Haas B.J."/>
            <person name="Inman J.M."/>
            <person name="Kent R."/>
            <person name="Lemieux S."/>
            <person name="Malavazi I."/>
            <person name="Orvis J."/>
            <person name="Roemer T."/>
            <person name="Ronning C.M."/>
            <person name="Sundaram J.P."/>
            <person name="Sutton G."/>
            <person name="Turner G."/>
            <person name="Venter J.C."/>
            <person name="White O.R."/>
            <person name="Whitty B.R."/>
            <person name="Youngman P."/>
            <person name="Wolfe K.H."/>
            <person name="Goldman G.H."/>
            <person name="Wortman J.R."/>
            <person name="Jiang B."/>
            <person name="Denning D.W."/>
            <person name="Nierman W.C."/>
        </authorList>
    </citation>
    <scope>NUCLEOTIDE SEQUENCE [LARGE SCALE GENOMIC DNA]</scope>
    <source>
        <strain>CBS 144.89 / FGSC A1163 / CEA10</strain>
    </source>
</reference>
<evidence type="ECO:0000255" key="1">
    <source>
        <dbReference type="HAMAP-Rule" id="MF_03056"/>
    </source>
</evidence>
<evidence type="ECO:0000256" key="2">
    <source>
        <dbReference type="SAM" id="MobiDB-lite"/>
    </source>
</evidence>
<protein>
    <recommendedName>
        <fullName evidence="1">tRNA (guanine-N(7)-)-methyltransferase non-catalytic subunit trm82</fullName>
    </recommendedName>
    <alternativeName>
        <fullName evidence="1">Transfer RNA methyltransferase 82</fullName>
    </alternativeName>
</protein>
<comment type="function">
    <text evidence="1">Required for the formation of N(7)-methylguanine at position 46 (m7G46) in tRNA. In the complex, it is required to stabilize and induce conformational changes of the catalytic subunit.</text>
</comment>
<comment type="pathway">
    <text evidence="1">tRNA modification; N(7)-methylguanine-tRNA biosynthesis.</text>
</comment>
<comment type="subunit">
    <text evidence="1">Forms a heterodimer with the catalytic subunit trm8.</text>
</comment>
<comment type="subcellular location">
    <subcellularLocation>
        <location evidence="1">Nucleus</location>
    </subcellularLocation>
</comment>
<comment type="similarity">
    <text evidence="1">Belongs to the WD repeat TRM82 family.</text>
</comment>
<accession>B0XNT4</accession>